<reference key="1">
    <citation type="journal article" date="2015" name="Metab. Eng.">
        <title>Production of bioactive ginsenosides Rh2 and Rg3 by metabolically engineered yeasts.</title>
        <authorList>
            <person name="Wang P."/>
            <person name="Wei Y."/>
            <person name="Fan Y."/>
            <person name="Liu Q."/>
            <person name="Wei W."/>
            <person name="Yang C."/>
            <person name="Zhang L."/>
            <person name="Zhao G."/>
            <person name="Yue J."/>
            <person name="Yan X."/>
            <person name="Zhou Z."/>
        </authorList>
    </citation>
    <scope>NUCLEOTIDE SEQUENCE [MRNA]</scope>
    <scope>FUNCTION</scope>
    <scope>CATALYTIC ACTIVITY</scope>
    <scope>BIOPHYSICOCHEMICAL PROPERTIES</scope>
</reference>
<reference key="2">
    <citation type="journal article" date="2018" name="Molecules">
        <title>Progress on the studies of the key enzymes of ginsenoside biosynthesis.</title>
        <authorList>
            <person name="Yang J.-L."/>
            <person name="Hu Z.-F."/>
            <person name="Zhang T.-T."/>
            <person name="Gu A.-D."/>
            <person name="Gong T."/>
            <person name="Zhu P."/>
        </authorList>
    </citation>
    <scope>REVIEW</scope>
    <scope>NOMENCLATURE</scope>
</reference>
<sequence>MEREMLSKTHIMFIPFPAQGHMSPMMQFAKRLAWKGLRITIVLPAQIRDFMQITNPLINTECISFDFDKDDGMPYSMQAYMGVVKLKVTNKLSDLLEKQRTNGYPVNLLVVDSLYPSRVEMCHQLGVKGAPFFTHSCAVGAIYYNARLGKLKIPPEEGLTSVSLPSIPLLGRDDLPIIRTGTFPDLFEHLGNQFSDLDKADWIFFNTFDKLENEEAKWLSSQWPITSIGPLIPSMYLDKQLPNDKDNGINFYKADVGSCIKWLDAKDPGSVVYASFGSVKHNLGDDYMDEVAWGLLHSKYHFIWVVIESERTKLSSDFLAEAEAEEKGLIVSWCPQLQVLSHKSIGSFMTHCGWNSTVEALSLGVPMVALPQQFDQPANAKYIVDVWQIGVRVPIGEEGVVLRGEVANCIKDVMEGEIGDELRGNALKWKGLAVEAMEKGGSSDKNIDEFISKLVSS</sequence>
<dbReference type="EC" id="2.4.1.-" evidence="3"/>
<dbReference type="EMBL" id="KM401918">
    <property type="protein sequence ID" value="AKA44586.1"/>
    <property type="molecule type" value="mRNA"/>
</dbReference>
<dbReference type="SMR" id="A0A0D5ZDC8"/>
<dbReference type="UniPathway" id="UPA00213"/>
<dbReference type="GO" id="GO:0080043">
    <property type="term" value="F:quercetin 3-O-glucosyltransferase activity"/>
    <property type="evidence" value="ECO:0007669"/>
    <property type="project" value="TreeGrafter"/>
</dbReference>
<dbReference type="GO" id="GO:0080044">
    <property type="term" value="F:quercetin 7-O-glucosyltransferase activity"/>
    <property type="evidence" value="ECO:0007669"/>
    <property type="project" value="TreeGrafter"/>
</dbReference>
<dbReference type="GO" id="GO:0008194">
    <property type="term" value="F:UDP-glycosyltransferase activity"/>
    <property type="evidence" value="ECO:0000314"/>
    <property type="project" value="UniProtKB"/>
</dbReference>
<dbReference type="GO" id="GO:0016135">
    <property type="term" value="P:saponin biosynthetic process"/>
    <property type="evidence" value="ECO:0000314"/>
    <property type="project" value="UniProtKB"/>
</dbReference>
<dbReference type="GO" id="GO:0046246">
    <property type="term" value="P:terpene biosynthetic process"/>
    <property type="evidence" value="ECO:0000314"/>
    <property type="project" value="UniProtKB"/>
</dbReference>
<dbReference type="GO" id="GO:0016114">
    <property type="term" value="P:terpenoid biosynthetic process"/>
    <property type="evidence" value="ECO:0007669"/>
    <property type="project" value="UniProtKB-UniPathway"/>
</dbReference>
<dbReference type="CDD" id="cd03784">
    <property type="entry name" value="GT1_Gtf-like"/>
    <property type="match status" value="1"/>
</dbReference>
<dbReference type="FunFam" id="3.40.50.2000:FF:000019">
    <property type="entry name" value="Glycosyltransferase"/>
    <property type="match status" value="1"/>
</dbReference>
<dbReference type="Gene3D" id="3.40.50.2000">
    <property type="entry name" value="Glycogen Phosphorylase B"/>
    <property type="match status" value="2"/>
</dbReference>
<dbReference type="InterPro" id="IPR002213">
    <property type="entry name" value="UDP_glucos_trans"/>
</dbReference>
<dbReference type="PANTHER" id="PTHR11926">
    <property type="entry name" value="GLUCOSYL/GLUCURONOSYL TRANSFERASES"/>
    <property type="match status" value="1"/>
</dbReference>
<dbReference type="PANTHER" id="PTHR11926:SF1560">
    <property type="entry name" value="UDP-GLYCOSYLTRANSFERASE 74E1-RELATED"/>
    <property type="match status" value="1"/>
</dbReference>
<dbReference type="Pfam" id="PF00201">
    <property type="entry name" value="UDPGT"/>
    <property type="match status" value="1"/>
</dbReference>
<dbReference type="SUPFAM" id="SSF53756">
    <property type="entry name" value="UDP-Glycosyltransferase/glycogen phosphorylase"/>
    <property type="match status" value="1"/>
</dbReference>
<feature type="chain" id="PRO_0000446963" description="UDP-glucosyltransferase 45">
    <location>
        <begin position="1"/>
        <end position="457"/>
    </location>
</feature>
<feature type="active site" description="Proton acceptor" evidence="1">
    <location>
        <position position="21"/>
    </location>
</feature>
<feature type="active site" description="Charge relay" evidence="1">
    <location>
        <position position="112"/>
    </location>
</feature>
<feature type="binding site" evidence="2">
    <location>
        <position position="21"/>
    </location>
    <ligand>
        <name>an anthocyanidin</name>
        <dbReference type="ChEBI" id="CHEBI:143576"/>
    </ligand>
</feature>
<feature type="binding site" evidence="1">
    <location>
        <position position="134"/>
    </location>
    <ligand>
        <name>UDP-alpha-D-glucose</name>
        <dbReference type="ChEBI" id="CHEBI:58885"/>
    </ligand>
</feature>
<feature type="binding site" evidence="1">
    <location>
        <position position="336"/>
    </location>
    <ligand>
        <name>UDP-alpha-D-glucose</name>
        <dbReference type="ChEBI" id="CHEBI:58885"/>
    </ligand>
</feature>
<feature type="binding site" evidence="1">
    <location>
        <position position="351"/>
    </location>
    <ligand>
        <name>UDP-alpha-D-glucose</name>
        <dbReference type="ChEBI" id="CHEBI:58885"/>
    </ligand>
</feature>
<feature type="binding site" evidence="1">
    <location>
        <position position="354"/>
    </location>
    <ligand>
        <name>UDP-alpha-D-glucose</name>
        <dbReference type="ChEBI" id="CHEBI:58885"/>
    </ligand>
</feature>
<feature type="binding site" evidence="1">
    <location>
        <position position="355"/>
    </location>
    <ligand>
        <name>UDP-alpha-D-glucose</name>
        <dbReference type="ChEBI" id="CHEBI:58885"/>
    </ligand>
</feature>
<feature type="binding site" evidence="1">
    <location>
        <position position="356"/>
    </location>
    <ligand>
        <name>UDP-alpha-D-glucose</name>
        <dbReference type="ChEBI" id="CHEBI:58885"/>
    </ligand>
</feature>
<feature type="binding site" evidence="1">
    <location>
        <position position="359"/>
    </location>
    <ligand>
        <name>UDP-alpha-D-glucose</name>
        <dbReference type="ChEBI" id="CHEBI:58885"/>
    </ligand>
</feature>
<feature type="binding site" evidence="1">
    <location>
        <position position="375"/>
    </location>
    <ligand>
        <name>UDP-alpha-D-glucose</name>
        <dbReference type="ChEBI" id="CHEBI:58885"/>
    </ligand>
</feature>
<feature type="binding site" evidence="1">
    <location>
        <position position="376"/>
    </location>
    <ligand>
        <name>UDP-alpha-D-glucose</name>
        <dbReference type="ChEBI" id="CHEBI:58885"/>
    </ligand>
</feature>
<comment type="function">
    <text evidence="3">Component of the triterpene saponins (e.g. PPD-type ginsenosides) biosynthetic pathway (PubMed:25769286). Glycosyltransferase that catalyzes the biosynthesis of ginsenoside Rh2 from protopanaxadiol (PPD) (PubMed:25769286).</text>
</comment>
<comment type="catalytic activity">
    <reaction evidence="3">
        <text>(20S)-protopanaxadiol + UDP-alpha-D-glucose = (20S)-ginsenoside Rh2 + UDP + H(+)</text>
        <dbReference type="Rhea" id="RHEA:57996"/>
        <dbReference type="ChEBI" id="CHEBI:15378"/>
        <dbReference type="ChEBI" id="CHEBI:58223"/>
        <dbReference type="ChEBI" id="CHEBI:58885"/>
        <dbReference type="ChEBI" id="CHEBI:75950"/>
        <dbReference type="ChEBI" id="CHEBI:77147"/>
    </reaction>
    <physiologicalReaction direction="left-to-right" evidence="3">
        <dbReference type="Rhea" id="RHEA:57997"/>
    </physiologicalReaction>
</comment>
<comment type="biophysicochemical properties">
    <kinetics>
        <KM evidence="3">209 uM for protopanaxadiol (at pH 8 and 40 degrees Celsius)</KM>
        <Vmax evidence="3">80.0 nmol/min/mg enzyme with protopanaxadiol as substrate (at pH 8 and 40 degrees Celsius)</Vmax>
        <text evidence="3">kcat is 0.384 sec(-1) with protopanaxadiol as substrate (at pH 8 and 40 degrees Celsius).</text>
    </kinetics>
</comment>
<comment type="pathway">
    <text evidence="6">Secondary metabolite biosynthesis; terpenoid biosynthesis.</text>
</comment>
<comment type="similarity">
    <text evidence="6">Belongs to the UDP-glycosyltransferase family.</text>
</comment>
<organism>
    <name type="scientific">Panax ginseng</name>
    <name type="common">Korean ginseng</name>
    <dbReference type="NCBI Taxonomy" id="4054"/>
    <lineage>
        <taxon>Eukaryota</taxon>
        <taxon>Viridiplantae</taxon>
        <taxon>Streptophyta</taxon>
        <taxon>Embryophyta</taxon>
        <taxon>Tracheophyta</taxon>
        <taxon>Spermatophyta</taxon>
        <taxon>Magnoliopsida</taxon>
        <taxon>eudicotyledons</taxon>
        <taxon>Gunneridae</taxon>
        <taxon>Pentapetalae</taxon>
        <taxon>asterids</taxon>
        <taxon>campanulids</taxon>
        <taxon>Apiales</taxon>
        <taxon>Araliaceae</taxon>
        <taxon>Panax</taxon>
    </lineage>
</organism>
<proteinExistence type="evidence at protein level"/>
<evidence type="ECO:0000250" key="1">
    <source>
        <dbReference type="UniProtKB" id="A0A0A1HA03"/>
    </source>
</evidence>
<evidence type="ECO:0000250" key="2">
    <source>
        <dbReference type="UniProtKB" id="P51094"/>
    </source>
</evidence>
<evidence type="ECO:0000269" key="3">
    <source>
    </source>
</evidence>
<evidence type="ECO:0000303" key="4">
    <source>
    </source>
</evidence>
<evidence type="ECO:0000303" key="5">
    <source>
    </source>
</evidence>
<evidence type="ECO:0000305" key="6"/>
<protein>
    <recommendedName>
        <fullName evidence="4">UDP-glucosyltransferase 45</fullName>
        <shortName evidence="4 5">UGTPg45</shortName>
        <ecNumber evidence="3">2.4.1.-</ecNumber>
    </recommendedName>
</protein>
<gene>
    <name evidence="4" type="primary">UGT45</name>
</gene>
<accession>A0A0D5ZDC8</accession>
<name>UGT45_PANGI</name>
<keyword id="KW-0414">Isoprene biosynthesis</keyword>
<keyword id="KW-0808">Transferase</keyword>